<protein>
    <recommendedName>
        <fullName>L-lactate dehydrogenase C chain</fullName>
        <shortName>LDH-C</shortName>
        <ecNumber>1.1.1.27</ecNumber>
    </recommendedName>
    <alternativeName>
        <fullName>LDH testis subunit</fullName>
    </alternativeName>
    <alternativeName>
        <fullName>LDH-X</fullName>
    </alternativeName>
</protein>
<evidence type="ECO:0000250" key="1"/>
<evidence type="ECO:0000269" key="2">
    <source>
    </source>
</evidence>
<evidence type="ECO:0000269" key="3">
    <source>
    </source>
</evidence>
<evidence type="ECO:0000305" key="4"/>
<evidence type="ECO:0007829" key="5">
    <source>
        <dbReference type="PDB" id="2LDX"/>
    </source>
</evidence>
<proteinExistence type="evidence at protein level"/>
<keyword id="KW-0002">3D-structure</keyword>
<keyword id="KW-0963">Cytoplasm</keyword>
<keyword id="KW-0903">Direct protein sequencing</keyword>
<keyword id="KW-0520">NAD</keyword>
<keyword id="KW-0560">Oxidoreductase</keyword>
<keyword id="KW-1185">Reference proteome</keyword>
<comment type="function">
    <text evidence="1">Possible role in sperm motility.</text>
</comment>
<comment type="catalytic activity">
    <reaction>
        <text>(S)-lactate + NAD(+) = pyruvate + NADH + H(+)</text>
        <dbReference type="Rhea" id="RHEA:23444"/>
        <dbReference type="ChEBI" id="CHEBI:15361"/>
        <dbReference type="ChEBI" id="CHEBI:15378"/>
        <dbReference type="ChEBI" id="CHEBI:16651"/>
        <dbReference type="ChEBI" id="CHEBI:57540"/>
        <dbReference type="ChEBI" id="CHEBI:57945"/>
        <dbReference type="EC" id="1.1.1.27"/>
    </reaction>
</comment>
<comment type="pathway">
    <text>Fermentation; pyruvate fermentation to lactate; (S)-lactate from pyruvate: step 1/1.</text>
</comment>
<comment type="subunit">
    <text evidence="2">Homotetramer. Interacts with RABL2/RABL2A; binds preferentially to GTP-bound RABL2.</text>
</comment>
<comment type="subcellular location">
    <subcellularLocation>
        <location>Cytoplasm</location>
    </subcellularLocation>
</comment>
<comment type="tissue specificity">
    <text evidence="2">Expressed within the midpiece of sperm tail (at protein level).</text>
</comment>
<comment type="similarity">
    <text evidence="4">Belongs to the LDH/MDH superfamily. LDH family.</text>
</comment>
<organism>
    <name type="scientific">Mus musculus</name>
    <name type="common">Mouse</name>
    <dbReference type="NCBI Taxonomy" id="10090"/>
    <lineage>
        <taxon>Eukaryota</taxon>
        <taxon>Metazoa</taxon>
        <taxon>Chordata</taxon>
        <taxon>Craniata</taxon>
        <taxon>Vertebrata</taxon>
        <taxon>Euteleostomi</taxon>
        <taxon>Mammalia</taxon>
        <taxon>Eutheria</taxon>
        <taxon>Euarchontoglires</taxon>
        <taxon>Glires</taxon>
        <taxon>Rodentia</taxon>
        <taxon>Myomorpha</taxon>
        <taxon>Muroidea</taxon>
        <taxon>Muridae</taxon>
        <taxon>Murinae</taxon>
        <taxon>Mus</taxon>
        <taxon>Mus</taxon>
    </lineage>
</organism>
<sequence length="332" mass="35912">MSTVKEQLIQNLVPEDKLSRCKITVVGVGNVGMACAISILLKGLADELALVDADTNKLRGEALDLLHGSLFLSTPKIVFGKDYNVSANSKLVIITAGARMVSGETRLDLLQRNVAIMKAIVPGIVQNSPDCKIIIVTNPVDILTYVVWKISGFPVGRVIGSGCNLDSARFRYLIGEKLGVNPTSCHGWVLGEHGDSSVPIWSGVNVAGVTLKSLNPAIGTDSDKEHWKNVHKQVVEGGYEVLNMKGYTSWAIGLSVTDLARSILKNLKRVHPVTTLVKGFHGIKEEVFLSIPCVLGQSGITDFVKVNMTAEEEGLLKKSADTLWNMQKDLQL</sequence>
<dbReference type="EC" id="1.1.1.27"/>
<dbReference type="EMBL" id="X04752">
    <property type="protein sequence ID" value="CAA28449.1"/>
    <property type="molecule type" value="mRNA"/>
</dbReference>
<dbReference type="EMBL" id="M17587">
    <property type="protein sequence ID" value="AAA39425.1"/>
    <property type="molecule type" value="mRNA"/>
</dbReference>
<dbReference type="EMBL" id="BC049602">
    <property type="protein sequence ID" value="AAH49602.1"/>
    <property type="molecule type" value="mRNA"/>
</dbReference>
<dbReference type="EMBL" id="M12781">
    <property type="protein sequence ID" value="AAA88315.1"/>
    <property type="molecule type" value="mRNA"/>
</dbReference>
<dbReference type="CCDS" id="CCDS21290.1"/>
<dbReference type="PIR" id="A26824">
    <property type="entry name" value="DEMSLC"/>
</dbReference>
<dbReference type="RefSeq" id="NP_001355290.1">
    <property type="nucleotide sequence ID" value="NM_001368361.1"/>
</dbReference>
<dbReference type="RefSeq" id="NP_001355291.1">
    <property type="nucleotide sequence ID" value="NM_001368362.1"/>
</dbReference>
<dbReference type="RefSeq" id="NP_038608.1">
    <property type="nucleotide sequence ID" value="NM_013580.4"/>
</dbReference>
<dbReference type="RefSeq" id="XP_006540742.1">
    <property type="nucleotide sequence ID" value="XM_006540679.1"/>
</dbReference>
<dbReference type="RefSeq" id="XP_006540743.1">
    <property type="nucleotide sequence ID" value="XM_006540680.1"/>
</dbReference>
<dbReference type="RefSeq" id="XP_006540744.1">
    <property type="nucleotide sequence ID" value="XM_006540681.1"/>
</dbReference>
<dbReference type="PDB" id="2LDX">
    <property type="method" value="X-ray"/>
    <property type="resolution" value="2.96 A"/>
    <property type="chains" value="A/B/C/D=2-332"/>
</dbReference>
<dbReference type="PDBsum" id="2LDX"/>
<dbReference type="SMR" id="P00342"/>
<dbReference type="BioGRID" id="201131">
    <property type="interactions" value="4"/>
</dbReference>
<dbReference type="FunCoup" id="P00342">
    <property type="interactions" value="331"/>
</dbReference>
<dbReference type="IntAct" id="P00342">
    <property type="interactions" value="3"/>
</dbReference>
<dbReference type="MINT" id="P00342"/>
<dbReference type="STRING" id="10090.ENSMUSP00000014545"/>
<dbReference type="BindingDB" id="P00342"/>
<dbReference type="GlyGen" id="P00342">
    <property type="glycosylation" value="1 site, 1 N-linked glycan (1 site)"/>
</dbReference>
<dbReference type="iPTMnet" id="P00342"/>
<dbReference type="PhosphoSitePlus" id="P00342"/>
<dbReference type="SwissPalm" id="P00342"/>
<dbReference type="REPRODUCTION-2DPAGE" id="P00342"/>
<dbReference type="jPOST" id="P00342"/>
<dbReference type="PaxDb" id="10090-ENSMUSP00000014545"/>
<dbReference type="PeptideAtlas" id="P00342"/>
<dbReference type="ProteomicsDB" id="292249"/>
<dbReference type="Antibodypedia" id="25085">
    <property type="antibodies" value="253 antibodies from 32 providers"/>
</dbReference>
<dbReference type="DNASU" id="16833"/>
<dbReference type="Ensembl" id="ENSMUST00000014545.11">
    <property type="protein sequence ID" value="ENSMUSP00000014545.5"/>
    <property type="gene ID" value="ENSMUSG00000030851.16"/>
</dbReference>
<dbReference type="GeneID" id="16833"/>
<dbReference type="KEGG" id="mmu:16833"/>
<dbReference type="UCSC" id="uc009gzp.1">
    <property type="organism name" value="mouse"/>
</dbReference>
<dbReference type="AGR" id="MGI:96764"/>
<dbReference type="CTD" id="3948"/>
<dbReference type="MGI" id="MGI:96764">
    <property type="gene designation" value="Ldhc"/>
</dbReference>
<dbReference type="VEuPathDB" id="HostDB:ENSMUSG00000030851"/>
<dbReference type="eggNOG" id="KOG1495">
    <property type="taxonomic scope" value="Eukaryota"/>
</dbReference>
<dbReference type="GeneTree" id="ENSGT00940000161479"/>
<dbReference type="HOGENOM" id="CLU_045401_0_2_1"/>
<dbReference type="InParanoid" id="P00342"/>
<dbReference type="OMA" id="EIMINAQ"/>
<dbReference type="OrthoDB" id="5405561at2759"/>
<dbReference type="PhylomeDB" id="P00342"/>
<dbReference type="TreeFam" id="TF314963"/>
<dbReference type="Reactome" id="R-MMU-70268">
    <property type="pathway name" value="Pyruvate metabolism"/>
</dbReference>
<dbReference type="UniPathway" id="UPA00554">
    <property type="reaction ID" value="UER00611"/>
</dbReference>
<dbReference type="BioGRID-ORCS" id="16833">
    <property type="hits" value="1 hit in 77 CRISPR screens"/>
</dbReference>
<dbReference type="CD-CODE" id="DE1E139C">
    <property type="entry name" value="Chromatoid body"/>
</dbReference>
<dbReference type="ChiTaRS" id="Ldhc">
    <property type="organism name" value="mouse"/>
</dbReference>
<dbReference type="EvolutionaryTrace" id="P00342"/>
<dbReference type="PRO" id="PR:P00342"/>
<dbReference type="Proteomes" id="UP000000589">
    <property type="component" value="Chromosome 7"/>
</dbReference>
<dbReference type="RNAct" id="P00342">
    <property type="molecule type" value="protein"/>
</dbReference>
<dbReference type="Bgee" id="ENSMUSG00000030851">
    <property type="expression patterns" value="Expressed in spermatid and 85 other cell types or tissues"/>
</dbReference>
<dbReference type="ExpressionAtlas" id="P00342">
    <property type="expression patterns" value="baseline and differential"/>
</dbReference>
<dbReference type="GO" id="GO:0005929">
    <property type="term" value="C:cilium"/>
    <property type="evidence" value="ECO:0000314"/>
    <property type="project" value="MGI"/>
</dbReference>
<dbReference type="GO" id="GO:0005737">
    <property type="term" value="C:cytoplasm"/>
    <property type="evidence" value="ECO:0000314"/>
    <property type="project" value="MGI"/>
</dbReference>
<dbReference type="GO" id="GO:0005829">
    <property type="term" value="C:cytosol"/>
    <property type="evidence" value="ECO:0000314"/>
    <property type="project" value="MGI"/>
</dbReference>
<dbReference type="GO" id="GO:0031514">
    <property type="term" value="C:motile cilium"/>
    <property type="evidence" value="ECO:0000314"/>
    <property type="project" value="MGI"/>
</dbReference>
<dbReference type="GO" id="GO:0004459">
    <property type="term" value="F:L-lactate dehydrogenase activity"/>
    <property type="evidence" value="ECO:0000315"/>
    <property type="project" value="MGI"/>
</dbReference>
<dbReference type="GO" id="GO:0006754">
    <property type="term" value="P:ATP biosynthetic process"/>
    <property type="evidence" value="ECO:0000315"/>
    <property type="project" value="MGI"/>
</dbReference>
<dbReference type="GO" id="GO:0030317">
    <property type="term" value="P:flagellated sperm motility"/>
    <property type="evidence" value="ECO:0000315"/>
    <property type="project" value="MGI"/>
</dbReference>
<dbReference type="GO" id="GO:0019244">
    <property type="term" value="P:lactate biosynthetic process from pyruvate"/>
    <property type="evidence" value="ECO:0000314"/>
    <property type="project" value="MGI"/>
</dbReference>
<dbReference type="GO" id="GO:0006089">
    <property type="term" value="P:lactate metabolic process"/>
    <property type="evidence" value="ECO:0000314"/>
    <property type="project" value="MGI"/>
</dbReference>
<dbReference type="GO" id="GO:0042867">
    <property type="term" value="P:pyruvate catabolic process"/>
    <property type="evidence" value="ECO:0000314"/>
    <property type="project" value="MGI"/>
</dbReference>
<dbReference type="CDD" id="cd05293">
    <property type="entry name" value="LDH_1"/>
    <property type="match status" value="1"/>
</dbReference>
<dbReference type="FunFam" id="3.40.50.720:FF:000029">
    <property type="entry name" value="L-lactate dehydrogenase A chain"/>
    <property type="match status" value="1"/>
</dbReference>
<dbReference type="FunFam" id="3.90.110.10:FF:000003">
    <property type="entry name" value="L-lactate dehydrogenase A chain"/>
    <property type="match status" value="1"/>
</dbReference>
<dbReference type="Gene3D" id="3.90.110.10">
    <property type="entry name" value="Lactate dehydrogenase/glycoside hydrolase, family 4, C-terminal"/>
    <property type="match status" value="1"/>
</dbReference>
<dbReference type="Gene3D" id="3.40.50.720">
    <property type="entry name" value="NAD(P)-binding Rossmann-like Domain"/>
    <property type="match status" value="1"/>
</dbReference>
<dbReference type="HAMAP" id="MF_00488">
    <property type="entry name" value="Lactate_dehydrog"/>
    <property type="match status" value="1"/>
</dbReference>
<dbReference type="InterPro" id="IPR001557">
    <property type="entry name" value="L-lactate/malate_DH"/>
</dbReference>
<dbReference type="InterPro" id="IPR011304">
    <property type="entry name" value="L-lactate_DH"/>
</dbReference>
<dbReference type="InterPro" id="IPR018177">
    <property type="entry name" value="L-lactate_DH_AS"/>
</dbReference>
<dbReference type="InterPro" id="IPR022383">
    <property type="entry name" value="Lactate/malate_DH_C"/>
</dbReference>
<dbReference type="InterPro" id="IPR001236">
    <property type="entry name" value="Lactate/malate_DH_N"/>
</dbReference>
<dbReference type="InterPro" id="IPR015955">
    <property type="entry name" value="Lactate_DH/Glyco_Ohase_4_C"/>
</dbReference>
<dbReference type="InterPro" id="IPR036291">
    <property type="entry name" value="NAD(P)-bd_dom_sf"/>
</dbReference>
<dbReference type="NCBIfam" id="TIGR01771">
    <property type="entry name" value="L-LDH-NAD"/>
    <property type="match status" value="1"/>
</dbReference>
<dbReference type="PANTHER" id="PTHR43128">
    <property type="entry name" value="L-2-HYDROXYCARBOXYLATE DEHYDROGENASE (NAD(P)(+))"/>
    <property type="match status" value="1"/>
</dbReference>
<dbReference type="PANTHER" id="PTHR43128:SF5">
    <property type="entry name" value="L-LACTATE DEHYDROGENASE C CHAIN"/>
    <property type="match status" value="1"/>
</dbReference>
<dbReference type="Pfam" id="PF02866">
    <property type="entry name" value="Ldh_1_C"/>
    <property type="match status" value="1"/>
</dbReference>
<dbReference type="Pfam" id="PF00056">
    <property type="entry name" value="Ldh_1_N"/>
    <property type="match status" value="1"/>
</dbReference>
<dbReference type="PIRSF" id="PIRSF000102">
    <property type="entry name" value="Lac_mal_DH"/>
    <property type="match status" value="1"/>
</dbReference>
<dbReference type="PRINTS" id="PR00086">
    <property type="entry name" value="LLDHDRGNASE"/>
</dbReference>
<dbReference type="SUPFAM" id="SSF56327">
    <property type="entry name" value="LDH C-terminal domain-like"/>
    <property type="match status" value="1"/>
</dbReference>
<dbReference type="SUPFAM" id="SSF51735">
    <property type="entry name" value="NAD(P)-binding Rossmann-fold domains"/>
    <property type="match status" value="1"/>
</dbReference>
<dbReference type="PROSITE" id="PS00064">
    <property type="entry name" value="L_LDH"/>
    <property type="match status" value="1"/>
</dbReference>
<accession>P00342</accession>
<feature type="initiator methionine" description="Removed" evidence="3">
    <location>
        <position position="1"/>
    </location>
</feature>
<feature type="chain" id="PRO_0000168480" description="L-lactate dehydrogenase C chain">
    <location>
        <begin position="2"/>
        <end position="332"/>
    </location>
</feature>
<feature type="active site" description="Proton acceptor" evidence="1">
    <location>
        <position position="193"/>
    </location>
</feature>
<feature type="binding site" evidence="1">
    <location>
        <begin position="29"/>
        <end position="57"/>
    </location>
    <ligand>
        <name>NAD(+)</name>
        <dbReference type="ChEBI" id="CHEBI:57540"/>
    </ligand>
</feature>
<feature type="binding site" evidence="1">
    <location>
        <position position="99"/>
    </location>
    <ligand>
        <name>NAD(+)</name>
        <dbReference type="ChEBI" id="CHEBI:57540"/>
    </ligand>
</feature>
<feature type="binding site" evidence="1">
    <location>
        <position position="106"/>
    </location>
    <ligand>
        <name>substrate</name>
    </ligand>
</feature>
<feature type="binding site" evidence="1">
    <location>
        <position position="138"/>
    </location>
    <ligand>
        <name>NAD(+)</name>
        <dbReference type="ChEBI" id="CHEBI:57540"/>
    </ligand>
</feature>
<feature type="binding site" evidence="1">
    <location>
        <position position="138"/>
    </location>
    <ligand>
        <name>substrate</name>
    </ligand>
</feature>
<feature type="binding site" evidence="1">
    <location>
        <position position="169"/>
    </location>
    <ligand>
        <name>substrate</name>
    </ligand>
</feature>
<feature type="binding site" evidence="1">
    <location>
        <position position="248"/>
    </location>
    <ligand>
        <name>substrate</name>
    </ligand>
</feature>
<feature type="modified residue" description="Blocked amino end (Ser)">
    <location>
        <position position="2"/>
    </location>
</feature>
<feature type="sequence conflict" description="In Ref. 6; AA sequence." evidence="4" ref="6">
    <original>Q</original>
    <variation>E</variation>
    <location>
        <position position="7"/>
    </location>
</feature>
<feature type="sequence conflict" description="In Ref. 6; AA sequence." evidence="4" ref="6">
    <location>
        <position position="15"/>
    </location>
</feature>
<feature type="sequence conflict" description="In Ref. 6; AA sequence." evidence="4" ref="6">
    <original>N</original>
    <variation>D</variation>
    <location>
        <position position="30"/>
    </location>
</feature>
<feature type="sequence conflict" description="In Ref. 6; AA sequence." evidence="4" ref="6">
    <original>N</original>
    <variation>D</variation>
    <location>
        <position position="56"/>
    </location>
</feature>
<feature type="sequence conflict" description="In Ref. 6; AA sequence." evidence="4" ref="6">
    <original>E</original>
    <variation>Q</variation>
    <location>
        <position position="104"/>
    </location>
</feature>
<feature type="sequence conflict" description="In Ref. 6; AA sequence." evidence="4" ref="6">
    <original>IV</original>
    <variation>VI</variation>
    <location>
        <begin position="124"/>
        <end position="125"/>
    </location>
</feature>
<feature type="sequence conflict" description="In Ref. 6; AA sequence." evidence="4" ref="6">
    <original>I</original>
    <variation>V</variation>
    <location>
        <position position="135"/>
    </location>
</feature>
<feature type="sequence conflict" description="In Ref. 6; AA sequence." evidence="4" ref="6">
    <original>DKE</original>
    <variation>NKQ</variation>
    <location>
        <begin position="223"/>
        <end position="225"/>
    </location>
</feature>
<feature type="sequence conflict" description="In Ref. 6; AA sequence." evidence="4" ref="6">
    <original>N</original>
    <variation>D</variation>
    <location>
        <position position="243"/>
    </location>
</feature>
<feature type="sequence conflict" description="In Ref. 6; AA sequence." evidence="4" ref="6">
    <original>Q</original>
    <variation>E</variation>
    <location>
        <position position="297"/>
    </location>
</feature>
<feature type="sequence conflict" description="In Ref. 6; AA sequence." evidence="4" ref="6">
    <original>DLQ</original>
    <variation>NLE</variation>
    <location>
        <begin position="329"/>
        <end position="331"/>
    </location>
</feature>
<feature type="helix" evidence="5">
    <location>
        <begin position="4"/>
        <end position="8"/>
    </location>
</feature>
<feature type="strand" evidence="5">
    <location>
        <begin position="9"/>
        <end position="11"/>
    </location>
</feature>
<feature type="strand" evidence="5">
    <location>
        <begin position="22"/>
        <end position="26"/>
    </location>
</feature>
<feature type="helix" evidence="5">
    <location>
        <begin position="30"/>
        <end position="40"/>
    </location>
</feature>
<feature type="turn" evidence="5">
    <location>
        <begin position="41"/>
        <end position="43"/>
    </location>
</feature>
<feature type="strand" evidence="5">
    <location>
        <begin position="46"/>
        <end position="51"/>
    </location>
</feature>
<feature type="helix" evidence="5">
    <location>
        <begin position="55"/>
        <end position="67"/>
    </location>
</feature>
<feature type="turn" evidence="5">
    <location>
        <begin position="68"/>
        <end position="71"/>
    </location>
</feature>
<feature type="strand" evidence="5">
    <location>
        <begin position="76"/>
        <end position="82"/>
    </location>
</feature>
<feature type="helix" evidence="5">
    <location>
        <begin position="83"/>
        <end position="86"/>
    </location>
</feature>
<feature type="strand" evidence="5">
    <location>
        <begin position="89"/>
        <end position="94"/>
    </location>
</feature>
<feature type="turn" evidence="5">
    <location>
        <begin position="102"/>
        <end position="104"/>
    </location>
</feature>
<feature type="helix" evidence="5">
    <location>
        <begin position="111"/>
        <end position="120"/>
    </location>
</feature>
<feature type="turn" evidence="5">
    <location>
        <begin position="121"/>
        <end position="123"/>
    </location>
</feature>
<feature type="helix" evidence="5">
    <location>
        <begin position="124"/>
        <end position="127"/>
    </location>
</feature>
<feature type="strand" evidence="5">
    <location>
        <begin position="132"/>
        <end position="135"/>
    </location>
</feature>
<feature type="strand" evidence="5">
    <location>
        <begin position="137"/>
        <end position="139"/>
    </location>
</feature>
<feature type="helix" evidence="5">
    <location>
        <begin position="140"/>
        <end position="151"/>
    </location>
</feature>
<feature type="turn" evidence="5">
    <location>
        <begin position="155"/>
        <end position="157"/>
    </location>
</feature>
<feature type="strand" evidence="5">
    <location>
        <begin position="158"/>
        <end position="160"/>
    </location>
</feature>
<feature type="helix" evidence="5">
    <location>
        <begin position="164"/>
        <end position="178"/>
    </location>
</feature>
<feature type="strand" evidence="5">
    <location>
        <begin position="189"/>
        <end position="191"/>
    </location>
</feature>
<feature type="strand" evidence="5">
    <location>
        <begin position="193"/>
        <end position="195"/>
    </location>
</feature>
<feature type="strand" evidence="5">
    <location>
        <begin position="197"/>
        <end position="199"/>
    </location>
</feature>
<feature type="helix" evidence="5">
    <location>
        <begin position="201"/>
        <end position="203"/>
    </location>
</feature>
<feature type="strand" evidence="5">
    <location>
        <begin position="205"/>
        <end position="207"/>
    </location>
</feature>
<feature type="strand" evidence="5">
    <location>
        <begin position="209"/>
        <end position="214"/>
    </location>
</feature>
<feature type="turn" evidence="5">
    <location>
        <begin position="215"/>
        <end position="217"/>
    </location>
</feature>
<feature type="strand" evidence="5">
    <location>
        <begin position="221"/>
        <end position="226"/>
    </location>
</feature>
<feature type="helix" evidence="5">
    <location>
        <begin position="228"/>
        <end position="245"/>
    </location>
</feature>
<feature type="helix" evidence="5">
    <location>
        <begin position="250"/>
        <end position="264"/>
    </location>
</feature>
<feature type="strand" evidence="5">
    <location>
        <begin position="269"/>
        <end position="276"/>
    </location>
</feature>
<feature type="strand" evidence="5">
    <location>
        <begin position="288"/>
        <end position="296"/>
    </location>
</feature>
<feature type="strand" evidence="5">
    <location>
        <begin position="299"/>
        <end position="304"/>
    </location>
</feature>
<feature type="helix" evidence="5">
    <location>
        <begin position="310"/>
        <end position="326"/>
    </location>
</feature>
<gene>
    <name type="primary">Ldhc</name>
    <name type="synonym">Ldh-3</name>
    <name type="synonym">Ldh3</name>
</gene>
<name>LDHC_MOUSE</name>
<reference key="1">
    <citation type="journal article" date="1987" name="Biochem. J.">
        <title>Molecular cloning and nucleotide sequence of the cDNA for sperm-specific lactate dehydrogenase-C from mouse.</title>
        <authorList>
            <person name="Sakai I."/>
            <person name="Sharief F.S."/>
            <person name="Li S.S.-L."/>
        </authorList>
    </citation>
    <scope>NUCLEOTIDE SEQUENCE [MRNA]</scope>
    <source>
        <strain>DBA/2J</strain>
        <tissue>Testis</tissue>
    </source>
</reference>
<reference key="2">
    <citation type="journal article" date="1987" name="Biochem. Biophys. Res. Commun.">
        <title>Molecular isolation and sequence determination of the cDNA for the mouse sperm-specific lactate dehydrogenase-X gene.</title>
        <authorList>
            <person name="Wu K.C."/>
            <person name="Chan K."/>
            <person name="Lee C.-Y.G."/>
            <person name="Lau Y.-F.C."/>
        </authorList>
    </citation>
    <scope>NUCLEOTIDE SEQUENCE [MRNA]</scope>
</reference>
<reference key="3">
    <citation type="journal article" date="2004" name="Genome Res.">
        <title>The status, quality, and expansion of the NIH full-length cDNA project: the Mammalian Gene Collection (MGC).</title>
        <authorList>
            <consortium name="The MGC Project Team"/>
        </authorList>
    </citation>
    <scope>NUCLEOTIDE SEQUENCE [LARGE SCALE MRNA]</scope>
    <source>
        <tissue>Testis</tissue>
    </source>
</reference>
<reference key="4">
    <citation type="journal article" date="1979" name="J. Biol. Chem.">
        <title>The tentative amino acid sequencing of lactate dehydrogenase C4 by X-ray diffraction analysis.</title>
        <authorList>
            <person name="Musick W.D."/>
            <person name="Rossmann M.G."/>
        </authorList>
    </citation>
    <scope>PRELIMINARY PROTEIN SEQUENCE OF 2-332</scope>
</reference>
<reference key="5">
    <citation type="journal article" date="1980" name="Hoppe-Seyler's Z. Physiol. Chem.">
        <title>The preliminary amino acid sequence of mouse testicular lactate dehydrogenase.</title>
        <authorList>
            <person name="Pan Y.-C.E."/>
            <person name="Huang S."/>
            <person name="Marciniszyn J.P. Jr."/>
            <person name="Lee C.-Y."/>
            <person name="Li S.S.-L."/>
        </authorList>
    </citation>
    <scope>PRELIMINARY PROTEIN SEQUENCE OF 2-332</scope>
</reference>
<reference key="6">
    <citation type="journal article" date="1983" name="J. Biol. Chem.">
        <title>Amino acid sequence studies on lactate dehydrogenase C4 isozymes from mouse and rat testes.</title>
        <authorList>
            <person name="Pan Y.-C.E."/>
            <person name="Sharief F.S."/>
            <person name="Okabe M."/>
            <person name="Huang S."/>
            <person name="Li S.S.-L."/>
        </authorList>
    </citation>
    <scope>PROTEIN SEQUENCE OF 2-332</scope>
</reference>
<reference key="7">
    <citation type="journal article" date="1986" name="Biochem. Biophys. Res. Commun.">
        <title>A postmeiotically expressed clone encodes lactate dehydrogenase isozyme X.</title>
        <authorList>
            <person name="Tanaka S."/>
            <person name="Fujimoto H."/>
        </authorList>
    </citation>
    <scope>NUCLEOTIDE SEQUENCE [MRNA] OF 194-332</scope>
</reference>
<reference key="8">
    <citation type="journal article" date="2010" name="Cell">
        <title>A tissue-specific atlas of mouse protein phosphorylation and expression.</title>
        <authorList>
            <person name="Huttlin E.L."/>
            <person name="Jedrychowski M.P."/>
            <person name="Elias J.E."/>
            <person name="Goswami T."/>
            <person name="Rad R."/>
            <person name="Beausoleil S.A."/>
            <person name="Villen J."/>
            <person name="Haas W."/>
            <person name="Sowa M.E."/>
            <person name="Gygi S.P."/>
        </authorList>
    </citation>
    <scope>IDENTIFICATION BY MASS SPECTROMETRY [LARGE SCALE ANALYSIS]</scope>
    <source>
        <tissue>Testis</tissue>
    </source>
</reference>
<reference key="9">
    <citation type="journal article" date="2012" name="PLoS Genet.">
        <title>RAB-like 2 has an essential role in male fertility, sperm intra-flagellar transport, and tail assembly.</title>
        <authorList>
            <person name="Lo J.C."/>
            <person name="Jamsai D."/>
            <person name="O'Connor A.E."/>
            <person name="Borg C."/>
            <person name="Clark B.J."/>
            <person name="Whisstock J.C."/>
            <person name="Field M.C."/>
            <person name="Adams V."/>
            <person name="Ishikawa T."/>
            <person name="Aitken R.J."/>
            <person name="Whittle B."/>
            <person name="Goodnow C.C."/>
            <person name="Ormandy C.J."/>
            <person name="O'Bryan M.K."/>
        </authorList>
    </citation>
    <scope>INTERACTION WITH RABL2</scope>
    <scope>TISSUE SPECIFICITY</scope>
</reference>
<reference key="10">
    <citation type="journal article" date="1979" name="J. Biol. Chem.">
        <title>The structure of mouse testicular lactate dehydrogenase isoenzyme C4 at 2.9-A resolution.</title>
        <authorList>
            <person name="Musick W.D.L."/>
            <person name="Rossmann M.G."/>
        </authorList>
    </citation>
    <scope>X-RAY CRYSTALLOGRAPHY (2.9 ANGSTROMS)</scope>
</reference>